<organism>
    <name type="scientific">Homo sapiens</name>
    <name type="common">Human</name>
    <dbReference type="NCBI Taxonomy" id="9606"/>
    <lineage>
        <taxon>Eukaryota</taxon>
        <taxon>Metazoa</taxon>
        <taxon>Chordata</taxon>
        <taxon>Craniata</taxon>
        <taxon>Vertebrata</taxon>
        <taxon>Euteleostomi</taxon>
        <taxon>Mammalia</taxon>
        <taxon>Eutheria</taxon>
        <taxon>Euarchontoglires</taxon>
        <taxon>Primates</taxon>
        <taxon>Haplorrhini</taxon>
        <taxon>Catarrhini</taxon>
        <taxon>Hominidae</taxon>
        <taxon>Homo</taxon>
    </lineage>
</organism>
<accession>Q13797</accession>
<accession>Q14638</accession>
<gene>
    <name type="primary">ITGA9</name>
</gene>
<keyword id="KW-0106">Calcium</keyword>
<keyword id="KW-0130">Cell adhesion</keyword>
<keyword id="KW-0903">Direct protein sequencing</keyword>
<keyword id="KW-1015">Disulfide bond</keyword>
<keyword id="KW-0325">Glycoprotein</keyword>
<keyword id="KW-0401">Integrin</keyword>
<keyword id="KW-0472">Membrane</keyword>
<keyword id="KW-0479">Metal-binding</keyword>
<keyword id="KW-1267">Proteomics identification</keyword>
<keyword id="KW-0675">Receptor</keyword>
<keyword id="KW-1185">Reference proteome</keyword>
<keyword id="KW-0677">Repeat</keyword>
<keyword id="KW-0732">Signal</keyword>
<keyword id="KW-0812">Transmembrane</keyword>
<keyword id="KW-1133">Transmembrane helix</keyword>
<dbReference type="EMBL" id="D25303">
    <property type="protein sequence ID" value="BAA04984.1"/>
    <property type="molecule type" value="mRNA"/>
</dbReference>
<dbReference type="EMBL" id="AC092055">
    <property type="status" value="NOT_ANNOTATED_CDS"/>
    <property type="molecule type" value="Genomic_DNA"/>
</dbReference>
<dbReference type="EMBL" id="AC093415">
    <property type="status" value="NOT_ANNOTATED_CDS"/>
    <property type="molecule type" value="Genomic_DNA"/>
</dbReference>
<dbReference type="EMBL" id="AP006240">
    <property type="status" value="NOT_ANNOTATED_CDS"/>
    <property type="molecule type" value="Genomic_DNA"/>
</dbReference>
<dbReference type="EMBL" id="L24158">
    <property type="protein sequence ID" value="AAA16099.1"/>
    <property type="molecule type" value="mRNA"/>
</dbReference>
<dbReference type="CCDS" id="CCDS2669.1"/>
<dbReference type="PIR" id="I58409">
    <property type="entry name" value="I58409"/>
</dbReference>
<dbReference type="RefSeq" id="NP_002198.2">
    <property type="nucleotide sequence ID" value="NM_002207.2"/>
</dbReference>
<dbReference type="SMR" id="Q13797"/>
<dbReference type="BioGRID" id="109886">
    <property type="interactions" value="33"/>
</dbReference>
<dbReference type="ComplexPortal" id="CPX-1816">
    <property type="entry name" value="Integrin alpha9-beta1 complex"/>
</dbReference>
<dbReference type="CORUM" id="Q13797"/>
<dbReference type="FunCoup" id="Q13797">
    <property type="interactions" value="970"/>
</dbReference>
<dbReference type="IntAct" id="Q13797">
    <property type="interactions" value="15"/>
</dbReference>
<dbReference type="STRING" id="9606.ENSP00000264741"/>
<dbReference type="ChEMBL" id="CHEMBL3170"/>
<dbReference type="GuidetoPHARMACOLOGY" id="2448"/>
<dbReference type="GlyCosmos" id="Q13797">
    <property type="glycosylation" value="11 sites, No reported glycans"/>
</dbReference>
<dbReference type="GlyGen" id="Q13797">
    <property type="glycosylation" value="12 sites, 7 N-linked glycans (3 sites)"/>
</dbReference>
<dbReference type="iPTMnet" id="Q13797"/>
<dbReference type="PhosphoSitePlus" id="Q13797"/>
<dbReference type="BioMuta" id="ITGA9"/>
<dbReference type="DMDM" id="229462922"/>
<dbReference type="CPTAC" id="CPTAC-1492"/>
<dbReference type="jPOST" id="Q13797"/>
<dbReference type="MassIVE" id="Q13797"/>
<dbReference type="PaxDb" id="9606-ENSP00000264741"/>
<dbReference type="PeptideAtlas" id="Q13797"/>
<dbReference type="ProteomicsDB" id="59688"/>
<dbReference type="ABCD" id="Q13797">
    <property type="antibodies" value="3 sequenced antibodies"/>
</dbReference>
<dbReference type="Antibodypedia" id="11893">
    <property type="antibodies" value="222 antibodies from 32 providers"/>
</dbReference>
<dbReference type="DNASU" id="3680"/>
<dbReference type="Ensembl" id="ENST00000264741.10">
    <property type="protein sequence ID" value="ENSP00000264741.5"/>
    <property type="gene ID" value="ENSG00000144668.12"/>
</dbReference>
<dbReference type="Ensembl" id="ENST00000707666.1">
    <property type="protein sequence ID" value="ENSP00000516955.1"/>
    <property type="gene ID" value="ENSG00000291488.1"/>
</dbReference>
<dbReference type="GeneID" id="3680"/>
<dbReference type="KEGG" id="hsa:3680"/>
<dbReference type="MANE-Select" id="ENST00000264741.10">
    <property type="protein sequence ID" value="ENSP00000264741.5"/>
    <property type="RefSeq nucleotide sequence ID" value="NM_002207.3"/>
    <property type="RefSeq protein sequence ID" value="NP_002198.2"/>
</dbReference>
<dbReference type="UCSC" id="uc003chd.4">
    <property type="organism name" value="human"/>
</dbReference>
<dbReference type="AGR" id="HGNC:6145"/>
<dbReference type="CTD" id="3680"/>
<dbReference type="DisGeNET" id="3680"/>
<dbReference type="GeneCards" id="ITGA9"/>
<dbReference type="HGNC" id="HGNC:6145">
    <property type="gene designation" value="ITGA9"/>
</dbReference>
<dbReference type="HPA" id="ENSG00000144668">
    <property type="expression patterns" value="Low tissue specificity"/>
</dbReference>
<dbReference type="MalaCards" id="ITGA9"/>
<dbReference type="MIM" id="603963">
    <property type="type" value="gene"/>
</dbReference>
<dbReference type="neXtProt" id="NX_Q13797"/>
<dbReference type="OpenTargets" id="ENSG00000144668"/>
<dbReference type="PharmGKB" id="PA29945"/>
<dbReference type="VEuPathDB" id="HostDB:ENSG00000144668"/>
<dbReference type="eggNOG" id="KOG3637">
    <property type="taxonomic scope" value="Eukaryota"/>
</dbReference>
<dbReference type="GeneTree" id="ENSGT00940000156503"/>
<dbReference type="HOGENOM" id="CLU_004111_5_0_1"/>
<dbReference type="InParanoid" id="Q13797"/>
<dbReference type="OMA" id="MMRKGMA"/>
<dbReference type="OrthoDB" id="5317514at2759"/>
<dbReference type="PAN-GO" id="Q13797">
    <property type="GO annotations" value="8 GO annotations based on evolutionary models"/>
</dbReference>
<dbReference type="PhylomeDB" id="Q13797"/>
<dbReference type="TreeFam" id="TF105391"/>
<dbReference type="PathwayCommons" id="Q13797"/>
<dbReference type="Reactome" id="R-HSA-216083">
    <property type="pathway name" value="Integrin cell surface interactions"/>
</dbReference>
<dbReference type="Reactome" id="R-HSA-3000178">
    <property type="pathway name" value="ECM proteoglycans"/>
</dbReference>
<dbReference type="Reactome" id="R-HSA-445144">
    <property type="pathway name" value="Signal transduction by L1"/>
</dbReference>
<dbReference type="SignaLink" id="Q13797"/>
<dbReference type="SIGNOR" id="Q13797"/>
<dbReference type="BioGRID-ORCS" id="3680">
    <property type="hits" value="13 hits in 1141 CRISPR screens"/>
</dbReference>
<dbReference type="ChiTaRS" id="ITGA9">
    <property type="organism name" value="human"/>
</dbReference>
<dbReference type="GeneWiki" id="ITGA9"/>
<dbReference type="GenomeRNAi" id="3680"/>
<dbReference type="Pharos" id="Q13797">
    <property type="development level" value="Tbio"/>
</dbReference>
<dbReference type="PRO" id="PR:Q13797"/>
<dbReference type="Proteomes" id="UP000005640">
    <property type="component" value="Chromosome 3"/>
</dbReference>
<dbReference type="RNAct" id="Q13797">
    <property type="molecule type" value="protein"/>
</dbReference>
<dbReference type="Bgee" id="ENSG00000144668">
    <property type="expression patterns" value="Expressed in urethra and 174 other cell types or tissues"/>
</dbReference>
<dbReference type="ExpressionAtlas" id="Q13797">
    <property type="expression patterns" value="baseline and differential"/>
</dbReference>
<dbReference type="GO" id="GO:0009925">
    <property type="term" value="C:basal plasma membrane"/>
    <property type="evidence" value="ECO:0007669"/>
    <property type="project" value="Ensembl"/>
</dbReference>
<dbReference type="GO" id="GO:0009897">
    <property type="term" value="C:external side of plasma membrane"/>
    <property type="evidence" value="ECO:0000318"/>
    <property type="project" value="GO_Central"/>
</dbReference>
<dbReference type="GO" id="GO:0034679">
    <property type="term" value="C:integrin alpha9-beta1 complex"/>
    <property type="evidence" value="ECO:0000353"/>
    <property type="project" value="ComplexPortal"/>
</dbReference>
<dbReference type="GO" id="GO:0008305">
    <property type="term" value="C:integrin complex"/>
    <property type="evidence" value="ECO:0000318"/>
    <property type="project" value="GO_Central"/>
</dbReference>
<dbReference type="GO" id="GO:0005886">
    <property type="term" value="C:plasma membrane"/>
    <property type="evidence" value="ECO:0000304"/>
    <property type="project" value="Reactome"/>
</dbReference>
<dbReference type="GO" id="GO:0005178">
    <property type="term" value="F:integrin binding"/>
    <property type="evidence" value="ECO:0000318"/>
    <property type="project" value="GO_Central"/>
</dbReference>
<dbReference type="GO" id="GO:0098640">
    <property type="term" value="F:integrin binding involved in cell-matrix adhesion"/>
    <property type="evidence" value="ECO:0000250"/>
    <property type="project" value="UniProtKB"/>
</dbReference>
<dbReference type="GO" id="GO:0046872">
    <property type="term" value="F:metal ion binding"/>
    <property type="evidence" value="ECO:0007669"/>
    <property type="project" value="UniProtKB-KW"/>
</dbReference>
<dbReference type="GO" id="GO:0007155">
    <property type="term" value="P:cell adhesion"/>
    <property type="evidence" value="ECO:0000316"/>
    <property type="project" value="MGI"/>
</dbReference>
<dbReference type="GO" id="GO:0033627">
    <property type="term" value="P:cell adhesion mediated by integrin"/>
    <property type="evidence" value="ECO:0000318"/>
    <property type="project" value="GO_Central"/>
</dbReference>
<dbReference type="GO" id="GO:0098609">
    <property type="term" value="P:cell-cell adhesion"/>
    <property type="evidence" value="ECO:0000318"/>
    <property type="project" value="GO_Central"/>
</dbReference>
<dbReference type="GO" id="GO:0007160">
    <property type="term" value="P:cell-matrix adhesion"/>
    <property type="evidence" value="ECO:0000303"/>
    <property type="project" value="ComplexPortal"/>
</dbReference>
<dbReference type="GO" id="GO:0007229">
    <property type="term" value="P:integrin-mediated signaling pathway"/>
    <property type="evidence" value="ECO:0000318"/>
    <property type="project" value="GO_Central"/>
</dbReference>
<dbReference type="GO" id="GO:0045906">
    <property type="term" value="P:negative regulation of vasoconstriction"/>
    <property type="evidence" value="ECO:0000315"/>
    <property type="project" value="UniProtKB"/>
</dbReference>
<dbReference type="GO" id="GO:0030593">
    <property type="term" value="P:neutrophil chemotaxis"/>
    <property type="evidence" value="ECO:0007669"/>
    <property type="project" value="Ensembl"/>
</dbReference>
<dbReference type="FunFam" id="2.60.40.1460:FF:000007">
    <property type="entry name" value="Integrin subunit alpha 9"/>
    <property type="match status" value="1"/>
</dbReference>
<dbReference type="FunFam" id="1.20.5.930:FF:000002">
    <property type="entry name" value="Integrin, alpha 9"/>
    <property type="match status" value="1"/>
</dbReference>
<dbReference type="FunFam" id="2.130.10.130:FF:000006">
    <property type="entry name" value="Integrin, alpha 9"/>
    <property type="match status" value="1"/>
</dbReference>
<dbReference type="FunFam" id="2.60.40.1510:FF:000013">
    <property type="entry name" value="Integrin, alpha 9"/>
    <property type="match status" value="1"/>
</dbReference>
<dbReference type="FunFam" id="2.60.40.1530:FF:000005">
    <property type="entry name" value="Integrin, alpha 9"/>
    <property type="match status" value="1"/>
</dbReference>
<dbReference type="Gene3D" id="1.20.5.930">
    <property type="entry name" value="Bicelle-embedded integrin alpha(iib) transmembrane segment"/>
    <property type="match status" value="1"/>
</dbReference>
<dbReference type="Gene3D" id="2.130.10.130">
    <property type="entry name" value="Integrin alpha, N-terminal"/>
    <property type="match status" value="1"/>
</dbReference>
<dbReference type="Gene3D" id="2.60.40.1460">
    <property type="entry name" value="Integrin domains. Chain A, domain 2"/>
    <property type="match status" value="1"/>
</dbReference>
<dbReference type="Gene3D" id="2.60.40.1510">
    <property type="entry name" value="ntegrin, alpha v. Chain A, domain 3"/>
    <property type="match status" value="1"/>
</dbReference>
<dbReference type="Gene3D" id="2.60.40.1530">
    <property type="entry name" value="ntegrin, alpha v. Chain A, domain 4"/>
    <property type="match status" value="1"/>
</dbReference>
<dbReference type="InterPro" id="IPR013517">
    <property type="entry name" value="FG-GAP"/>
</dbReference>
<dbReference type="InterPro" id="IPR013519">
    <property type="entry name" value="Int_alpha_beta-p"/>
</dbReference>
<dbReference type="InterPro" id="IPR000413">
    <property type="entry name" value="Integrin_alpha"/>
</dbReference>
<dbReference type="InterPro" id="IPR018184">
    <property type="entry name" value="Integrin_alpha_C_CS"/>
</dbReference>
<dbReference type="InterPro" id="IPR013649">
    <property type="entry name" value="Integrin_alpha_Ig-like_1"/>
</dbReference>
<dbReference type="InterPro" id="IPR048285">
    <property type="entry name" value="Integrin_alpha_Ig-like_2"/>
</dbReference>
<dbReference type="InterPro" id="IPR048286">
    <property type="entry name" value="Integrin_alpha_Ig-like_3"/>
</dbReference>
<dbReference type="InterPro" id="IPR028994">
    <property type="entry name" value="Integrin_alpha_N"/>
</dbReference>
<dbReference type="InterPro" id="IPR032695">
    <property type="entry name" value="Integrin_dom_sf"/>
</dbReference>
<dbReference type="PANTHER" id="PTHR23220">
    <property type="entry name" value="INTEGRIN ALPHA"/>
    <property type="match status" value="1"/>
</dbReference>
<dbReference type="PANTHER" id="PTHR23220:SF69">
    <property type="entry name" value="INTEGRIN ALPHA-9"/>
    <property type="match status" value="1"/>
</dbReference>
<dbReference type="Pfam" id="PF01839">
    <property type="entry name" value="FG-GAP"/>
    <property type="match status" value="2"/>
</dbReference>
<dbReference type="Pfam" id="PF08441">
    <property type="entry name" value="Integrin_A_Ig_1"/>
    <property type="match status" value="1"/>
</dbReference>
<dbReference type="Pfam" id="PF20805">
    <property type="entry name" value="Integrin_A_Ig_2"/>
    <property type="match status" value="1"/>
</dbReference>
<dbReference type="Pfam" id="PF20806">
    <property type="entry name" value="Integrin_A_Ig_3"/>
    <property type="match status" value="1"/>
</dbReference>
<dbReference type="PRINTS" id="PR01185">
    <property type="entry name" value="INTEGRINA"/>
</dbReference>
<dbReference type="SMART" id="SM00191">
    <property type="entry name" value="Int_alpha"/>
    <property type="match status" value="5"/>
</dbReference>
<dbReference type="SUPFAM" id="SSF69318">
    <property type="entry name" value="Integrin alpha N-terminal domain"/>
    <property type="match status" value="1"/>
</dbReference>
<dbReference type="SUPFAM" id="SSF69179">
    <property type="entry name" value="Integrin domains"/>
    <property type="match status" value="3"/>
</dbReference>
<dbReference type="PROSITE" id="PS51470">
    <property type="entry name" value="FG_GAP"/>
    <property type="match status" value="7"/>
</dbReference>
<dbReference type="PROSITE" id="PS00242">
    <property type="entry name" value="INTEGRIN_ALPHA"/>
    <property type="match status" value="1"/>
</dbReference>
<proteinExistence type="evidence at protein level"/>
<sequence>MGGPAAPRGAGRLRALLLALVVAGIPAGAYNLDPQRPVHFQGPADSFFGYAVLEHFHDNTRWVLVGAPKADSKYSPSVKSPGAVFKCRVHTNPDRRCTELDMARGKNRGTSCGKTCREDRDDEWMGVSLARQPKADGRVLACAHRWKNIYYEADHILPHGFCYIIPSNLQAKGRTLIPCYEEYKKKYGEEHGSCQAGIAGFFTEELVVMGAPGSFYWAGTIKVLNLTDNTYLKLNDEVIMNRRYTYLGYAVTAGHFSHPSTIDVVGGAPQDKGIGKVYIFRADRRSGTLIKIFQASGKKMGSYFGSSLCAVDLNGDGLSDLLVGAPMFSEIRDEGQVTVYINRGNGALEEQLALTGDGAYNAHFGESIASLDDLDNDGFPDVAIGAPKEDDFAGAVYIYHGDAGGIVPQYSMKLSGQKINPVLRMFGQSISGGIDMDGNGYPDVTVGAFMSDSVVLLRARPVITVDVSIFLPGSINITAPQCHDGQQPVNCLNVTTCFSFHGKHVPGEIGLNYVLMADVAKKEKGQMPRVYFVLLGETMGQVTEKLQLTYMEETCRHYVAHVKRRVQDVISPIVFEAAYSLSEHVTGEEERELPPLTPVLRWKKGQKIAQKNQTVFERNCRSEDCAADLQLQGKLLLSSMDEKTLYLALGAVKNISLNISISNLGDDAYDANVSFNVSRELFFINMWQKEEMGISCELLESDFLKCSVGFPFMRSKSKYEFSVIFDTSHLSGEEEVLSFIVTAQSGNTERSESLHDNTLVLMVPLMHEVDTSITGIMSPTSFVYGESVDAANFIQLDDLECHFQPINITLQVYNTGPSTLPGSSVSISFPNRLSSGGAEMFHVQEMVVGQEKGNCSFQKNPTPCIIPQEQENIFHTIFAFFTKSGRKVLDCEKPGISCLTAHCNFSALAKEESRTIDIYMLLNTEILKKDSSSVIQFMSRAKVKVDPALRVVEIAHGNPEEVTVVFEALHNLEPRGYVVGWIIAISLLVGILIFLLLAVLLWKMGFFRRRYKEIIEAEKNRKENEDSWDWVQKNQ</sequence>
<reference key="1">
    <citation type="journal article" date="1994" name="Oncogene">
        <title>Aberrant upregulation of a novel integrin alpha subunit gene at 3p21.3 in small cell lung cancer.</title>
        <authorList>
            <person name="Hibi K."/>
            <person name="Yamakawa K."/>
            <person name="Ueda R."/>
            <person name="Horio Y."/>
            <person name="Murata Y."/>
            <person name="Tamari M."/>
            <person name="Uchida K."/>
            <person name="Takahashi T."/>
            <person name="Nakamura Y."/>
            <person name="Takahashi T."/>
        </authorList>
    </citation>
    <scope>NUCLEOTIDE SEQUENCE [MRNA]</scope>
    <scope>VARIANT GLU-507</scope>
    <scope>DEVELOPMENTAL STAGE</scope>
    <source>
        <tissue>Lung</tissue>
    </source>
</reference>
<reference key="2">
    <citation type="journal article" date="2006" name="Nature">
        <title>The DNA sequence, annotation and analysis of human chromosome 3.</title>
        <authorList>
            <person name="Muzny D.M."/>
            <person name="Scherer S.E."/>
            <person name="Kaul R."/>
            <person name="Wang J."/>
            <person name="Yu J."/>
            <person name="Sudbrak R."/>
            <person name="Buhay C.J."/>
            <person name="Chen R."/>
            <person name="Cree A."/>
            <person name="Ding Y."/>
            <person name="Dugan-Rocha S."/>
            <person name="Gill R."/>
            <person name="Gunaratne P."/>
            <person name="Harris R.A."/>
            <person name="Hawes A.C."/>
            <person name="Hernandez J."/>
            <person name="Hodgson A.V."/>
            <person name="Hume J."/>
            <person name="Jackson A."/>
            <person name="Khan Z.M."/>
            <person name="Kovar-Smith C."/>
            <person name="Lewis L.R."/>
            <person name="Lozado R.J."/>
            <person name="Metzker M.L."/>
            <person name="Milosavljevic A."/>
            <person name="Miner G.R."/>
            <person name="Morgan M.B."/>
            <person name="Nazareth L.V."/>
            <person name="Scott G."/>
            <person name="Sodergren E."/>
            <person name="Song X.-Z."/>
            <person name="Steffen D."/>
            <person name="Wei S."/>
            <person name="Wheeler D.A."/>
            <person name="Wright M.W."/>
            <person name="Worley K.C."/>
            <person name="Yuan Y."/>
            <person name="Zhang Z."/>
            <person name="Adams C.Q."/>
            <person name="Ansari-Lari M.A."/>
            <person name="Ayele M."/>
            <person name="Brown M.J."/>
            <person name="Chen G."/>
            <person name="Chen Z."/>
            <person name="Clendenning J."/>
            <person name="Clerc-Blankenburg K.P."/>
            <person name="Chen R."/>
            <person name="Chen Z."/>
            <person name="Davis C."/>
            <person name="Delgado O."/>
            <person name="Dinh H.H."/>
            <person name="Dong W."/>
            <person name="Draper H."/>
            <person name="Ernst S."/>
            <person name="Fu G."/>
            <person name="Gonzalez-Garay M.L."/>
            <person name="Garcia D.K."/>
            <person name="Gillett W."/>
            <person name="Gu J."/>
            <person name="Hao B."/>
            <person name="Haugen E."/>
            <person name="Havlak P."/>
            <person name="He X."/>
            <person name="Hennig S."/>
            <person name="Hu S."/>
            <person name="Huang W."/>
            <person name="Jackson L.R."/>
            <person name="Jacob L.S."/>
            <person name="Kelly S.H."/>
            <person name="Kube M."/>
            <person name="Levy R."/>
            <person name="Li Z."/>
            <person name="Liu B."/>
            <person name="Liu J."/>
            <person name="Liu W."/>
            <person name="Lu J."/>
            <person name="Maheshwari M."/>
            <person name="Nguyen B.-V."/>
            <person name="Okwuonu G.O."/>
            <person name="Palmeiri A."/>
            <person name="Pasternak S."/>
            <person name="Perez L.M."/>
            <person name="Phelps K.A."/>
            <person name="Plopper F.J."/>
            <person name="Qiang B."/>
            <person name="Raymond C."/>
            <person name="Rodriguez R."/>
            <person name="Saenphimmachak C."/>
            <person name="Santibanez J."/>
            <person name="Shen H."/>
            <person name="Shen Y."/>
            <person name="Subramanian S."/>
            <person name="Tabor P.E."/>
            <person name="Verduzco D."/>
            <person name="Waldron L."/>
            <person name="Wang J."/>
            <person name="Wang J."/>
            <person name="Wang Q."/>
            <person name="Williams G.A."/>
            <person name="Wong G.K.-S."/>
            <person name="Yao Z."/>
            <person name="Zhang J."/>
            <person name="Zhang X."/>
            <person name="Zhao G."/>
            <person name="Zhou J."/>
            <person name="Zhou Y."/>
            <person name="Nelson D."/>
            <person name="Lehrach H."/>
            <person name="Reinhardt R."/>
            <person name="Naylor S.L."/>
            <person name="Yang H."/>
            <person name="Olson M."/>
            <person name="Weinstock G."/>
            <person name="Gibbs R.A."/>
        </authorList>
    </citation>
    <scope>NUCLEOTIDE SEQUENCE [LARGE SCALE GENOMIC DNA]</scope>
</reference>
<reference key="3">
    <citation type="journal article" date="1993" name="J. Cell Biol.">
        <title>Sequence and tissue distribution of the integrin alpha 9 subunit, a novel partner of beta 1 that is widely distributed in epithelia and muscle.</title>
        <authorList>
            <person name="Palmer E.L."/>
            <person name="Rueegg C."/>
            <person name="Ferrando R."/>
            <person name="Pytela R."/>
            <person name="Sheppard D."/>
        </authorList>
    </citation>
    <scope>NUCLEOTIDE SEQUENCE [MRNA] OF 36-1035</scope>
    <scope>PROTEIN SEQUENCE OF 30-35</scope>
    <scope>VARIANT GLU-507</scope>
    <scope>TISSUE SPECIFICITY</scope>
    <source>
        <tissue>Intestine</tissue>
        <tissue>Lung</tissue>
    </source>
</reference>
<reference key="4">
    <citation type="journal article" date="2009" name="J. Proteome Res.">
        <title>Glycoproteomics analysis of human liver tissue by combination of multiple enzyme digestion and hydrazide chemistry.</title>
        <authorList>
            <person name="Chen R."/>
            <person name="Jiang X."/>
            <person name="Sun D."/>
            <person name="Han G."/>
            <person name="Wang F."/>
            <person name="Ye M."/>
            <person name="Wang L."/>
            <person name="Zou H."/>
        </authorList>
    </citation>
    <scope>GLYCOSYLATION [LARGE SCALE ANALYSIS] AT ASN-225</scope>
    <source>
        <tissue>Liver</tissue>
    </source>
</reference>
<reference key="5">
    <citation type="journal article" date="2006" name="Science">
        <title>The consensus coding sequences of human breast and colorectal cancers.</title>
        <authorList>
            <person name="Sjoeblom T."/>
            <person name="Jones S."/>
            <person name="Wood L.D."/>
            <person name="Parsons D.W."/>
            <person name="Lin J."/>
            <person name="Barber T.D."/>
            <person name="Mandelker D."/>
            <person name="Leary R.J."/>
            <person name="Ptak J."/>
            <person name="Silliman N."/>
            <person name="Szabo S."/>
            <person name="Buckhaults P."/>
            <person name="Farrell C."/>
            <person name="Meeh P."/>
            <person name="Markowitz S.D."/>
            <person name="Willis J."/>
            <person name="Dawson D."/>
            <person name="Willson J.K.V."/>
            <person name="Gazdar A.F."/>
            <person name="Hartigan J."/>
            <person name="Wu L."/>
            <person name="Liu C."/>
            <person name="Parmigiani G."/>
            <person name="Park B.H."/>
            <person name="Bachman K.E."/>
            <person name="Papadopoulos N."/>
            <person name="Vogelstein B."/>
            <person name="Kinzler K.W."/>
            <person name="Velculescu V.E."/>
        </authorList>
    </citation>
    <scope>VARIANT [LARGE SCALE ANALYSIS] CYS-750</scope>
</reference>
<reference key="6">
    <citation type="journal article" date="2012" name="J. Biol. Chem.">
        <title>Polydom/SVEP1 is a ligand for integrin alpha9beta1.</title>
        <authorList>
            <person name="Sato-Nishiuchi R."/>
            <person name="Nakano I."/>
            <person name="Ozawa A."/>
            <person name="Sato Y."/>
            <person name="Takeichi M."/>
            <person name="Kiyozumi D."/>
            <person name="Yamazaki K."/>
            <person name="Yasunaga T."/>
            <person name="Futaki S."/>
            <person name="Sekiguchi K."/>
        </authorList>
    </citation>
    <scope>INTERACTION WITH TNC</scope>
</reference>
<reference key="7">
    <citation type="journal article" date="2022" name="Br. J. Pharmacol.">
        <title>The integrin ligand SVEP1 regulates GPCR-mediated vasoconstriction via integrins alpha9beta1 and alpha4beta1.</title>
        <authorList>
            <person name="Morris G.E."/>
            <person name="Denniff M.J."/>
            <person name="Karamanavi E."/>
            <person name="Andrews S.A."/>
            <person name="Kostogrys R.B."/>
            <person name="Bountziouka V."/>
            <person name="Ghaderi-Najafabadi M."/>
            <person name="Shamkhi N."/>
            <person name="McConnell G."/>
            <person name="Kaiser M.A."/>
            <person name="Carleton L."/>
            <person name="Schofield C."/>
            <person name="Kessler T."/>
            <person name="Rainbow R.D."/>
            <person name="Samani N.J."/>
            <person name="Webb T.R."/>
        </authorList>
    </citation>
    <scope>FUNCTION</scope>
    <scope>INTERACTION WITH SVEP1</scope>
    <scope>TISSUE SPECIFICITY</scope>
</reference>
<evidence type="ECO:0000250" key="1"/>
<evidence type="ECO:0000250" key="2">
    <source>
        <dbReference type="UniProtKB" id="B8JK39"/>
    </source>
</evidence>
<evidence type="ECO:0000250" key="3">
    <source>
        <dbReference type="UniProtKB" id="P08648"/>
    </source>
</evidence>
<evidence type="ECO:0000255" key="4"/>
<evidence type="ECO:0000255" key="5">
    <source>
        <dbReference type="PROSITE-ProRule" id="PRU00803"/>
    </source>
</evidence>
<evidence type="ECO:0000269" key="6">
    <source>
    </source>
</evidence>
<evidence type="ECO:0000269" key="7">
    <source>
    </source>
</evidence>
<evidence type="ECO:0000269" key="8">
    <source>
    </source>
</evidence>
<evidence type="ECO:0000269" key="9">
    <source>
    </source>
</evidence>
<evidence type="ECO:0000269" key="10">
    <source>
    </source>
</evidence>
<evidence type="ECO:0000269" key="11">
    <source>
    </source>
</evidence>
<evidence type="ECO:0000305" key="12"/>
<name>ITA9_HUMAN</name>
<comment type="function">
    <text evidence="1 2 9">Integrin alpha-9/beta-1 (ITGA9:ITGB1) is a receptor for VCAM1, cytotactin and osteopontin. It recognizes the sequence A-E-I-D-G-I-E-L in cytotactin. ITGA9:ITGB1 may play a crucial role in SVEP1/polydom-mediated myoblast cell adhesion (By similarity). Integrin ITGA9:ITGB1 represses PRKCA-mediated L-type voltage-gated channel Ca(2+) influx and ROCK-mediated calcium sensitivity in vascular smooth muscle cells via its interaction with SVEP1, thereby inhibiting vasocontraction (PubMed:35802072).</text>
</comment>
<comment type="subunit">
    <text evidence="1 2 8 9">Heterodimer of an alpha and a beta subunit. Alpha-9 (ITGA9) associates with beta-1 (ITGB1). Integrin ITGA9:ITGB1 interacts with FBLN5 (via N-terminus). Integrin ITGA9:ITGB1 interacts with SPP1/OPN (via N-terminus) (By similarity). Integrin ITGA9:ITGB1 interacts with TNC/TNFN3 (via the 3rd Fibronectin type-III domain) (PubMed:22654117). Integrin ITGA9:ITGB1 interacts with SVEP1/polydom (via Sushi domain 21); thereby inhibits Ca(2+) intracellular signaling and as a result represses vasocontraction (PubMed:35802072).</text>
</comment>
<comment type="subcellular location">
    <subcellularLocation>
        <location evidence="4">Membrane</location>
        <topology evidence="4">Single-pass type I membrane protein</topology>
    </subcellularLocation>
</comment>
<comment type="tissue specificity">
    <text evidence="9 10">Expressed in vascular smooth muscle cells (at protein level) (PubMed:35802072). Expressed in the airway epithelium (at protein level) (PubMed:8245132).</text>
</comment>
<comment type="developmental stage">
    <text evidence="11">Abundantly expressed in the fetal lung.</text>
</comment>
<comment type="miscellaneous">
    <text evidence="11">Expression is increased in small cell lung cancers (SCLC).</text>
</comment>
<comment type="similarity">
    <text evidence="12">Belongs to the integrin alpha chain family.</text>
</comment>
<feature type="signal peptide" evidence="4">
    <location>
        <begin position="1"/>
        <end position="29"/>
    </location>
</feature>
<feature type="chain" id="PRO_0000016316" description="Integrin alpha-9">
    <location>
        <begin position="30"/>
        <end position="1035"/>
    </location>
</feature>
<feature type="topological domain" description="Extracellular" evidence="4">
    <location>
        <begin position="30"/>
        <end position="981"/>
    </location>
</feature>
<feature type="transmembrane region" description="Helical" evidence="4">
    <location>
        <begin position="982"/>
        <end position="1002"/>
    </location>
</feature>
<feature type="topological domain" description="Cytoplasmic" evidence="4">
    <location>
        <begin position="1003"/>
        <end position="1035"/>
    </location>
</feature>
<feature type="repeat" description="FG-GAP 1" evidence="5">
    <location>
        <begin position="35"/>
        <end position="96"/>
    </location>
</feature>
<feature type="repeat" description="FG-GAP 2" evidence="5">
    <location>
        <begin position="111"/>
        <end position="174"/>
    </location>
</feature>
<feature type="repeat" description="FG-GAP 3" evidence="5">
    <location>
        <begin position="182"/>
        <end position="232"/>
    </location>
</feature>
<feature type="repeat" description="FG-GAP 4" evidence="5">
    <location>
        <begin position="233"/>
        <end position="289"/>
    </location>
</feature>
<feature type="repeat" description="FG-GAP 5" evidence="5">
    <location>
        <begin position="290"/>
        <end position="349"/>
    </location>
</feature>
<feature type="repeat" description="FG-GAP 6" evidence="5">
    <location>
        <begin position="351"/>
        <end position="408"/>
    </location>
</feature>
<feature type="repeat" description="FG-GAP 7" evidence="5">
    <location>
        <begin position="411"/>
        <end position="474"/>
    </location>
</feature>
<feature type="short sequence motif" description="GFFKR motif">
    <location>
        <begin position="1005"/>
        <end position="1009"/>
    </location>
</feature>
<feature type="binding site" evidence="3">
    <location>
        <position position="312"/>
    </location>
    <ligand>
        <name>Ca(2+)</name>
        <dbReference type="ChEBI" id="CHEBI:29108"/>
        <label>1</label>
    </ligand>
</feature>
<feature type="binding site" evidence="3">
    <location>
        <position position="314"/>
    </location>
    <ligand>
        <name>Ca(2+)</name>
        <dbReference type="ChEBI" id="CHEBI:29108"/>
        <label>1</label>
    </ligand>
</feature>
<feature type="binding site" evidence="3">
    <location>
        <position position="316"/>
    </location>
    <ligand>
        <name>Ca(2+)</name>
        <dbReference type="ChEBI" id="CHEBI:29108"/>
        <label>1</label>
    </ligand>
</feature>
<feature type="binding site" evidence="3">
    <location>
        <position position="320"/>
    </location>
    <ligand>
        <name>Ca(2+)</name>
        <dbReference type="ChEBI" id="CHEBI:29108"/>
        <label>1</label>
    </ligand>
</feature>
<feature type="binding site" evidence="3">
    <location>
        <position position="373"/>
    </location>
    <ligand>
        <name>Ca(2+)</name>
        <dbReference type="ChEBI" id="CHEBI:29108"/>
        <label>2</label>
    </ligand>
</feature>
<feature type="binding site" evidence="3">
    <location>
        <position position="375"/>
    </location>
    <ligand>
        <name>Ca(2+)</name>
        <dbReference type="ChEBI" id="CHEBI:29108"/>
        <label>2</label>
    </ligand>
</feature>
<feature type="binding site" evidence="3">
    <location>
        <position position="377"/>
    </location>
    <ligand>
        <name>Ca(2+)</name>
        <dbReference type="ChEBI" id="CHEBI:29108"/>
        <label>2</label>
    </ligand>
</feature>
<feature type="binding site" evidence="3">
    <location>
        <position position="381"/>
    </location>
    <ligand>
        <name>Ca(2+)</name>
        <dbReference type="ChEBI" id="CHEBI:29108"/>
        <label>2</label>
    </ligand>
</feature>
<feature type="binding site" evidence="3">
    <location>
        <position position="435"/>
    </location>
    <ligand>
        <name>Ca(2+)</name>
        <dbReference type="ChEBI" id="CHEBI:29108"/>
        <label>3</label>
    </ligand>
</feature>
<feature type="binding site" evidence="3">
    <location>
        <position position="437"/>
    </location>
    <ligand>
        <name>Ca(2+)</name>
        <dbReference type="ChEBI" id="CHEBI:29108"/>
        <label>3</label>
    </ligand>
</feature>
<feature type="binding site" evidence="3">
    <location>
        <position position="439"/>
    </location>
    <ligand>
        <name>Ca(2+)</name>
        <dbReference type="ChEBI" id="CHEBI:29108"/>
        <label>3</label>
    </ligand>
</feature>
<feature type="binding site" evidence="3">
    <location>
        <position position="443"/>
    </location>
    <ligand>
        <name>Ca(2+)</name>
        <dbReference type="ChEBI" id="CHEBI:29108"/>
        <label>3</label>
    </ligand>
</feature>
<feature type="site" description="Cleavage" evidence="4">
    <location>
        <begin position="565"/>
        <end position="566"/>
    </location>
</feature>
<feature type="glycosylation site" description="N-linked (GlcNAc...) asparagine" evidence="7">
    <location>
        <position position="225"/>
    </location>
</feature>
<feature type="glycosylation site" description="N-linked (GlcNAc...) asparagine" evidence="4">
    <location>
        <position position="476"/>
    </location>
</feature>
<feature type="glycosylation site" description="N-linked (GlcNAc...) asparagine" evidence="4">
    <location>
        <position position="493"/>
    </location>
</feature>
<feature type="glycosylation site" description="N-linked (GlcNAc...) asparagine" evidence="4">
    <location>
        <position position="612"/>
    </location>
</feature>
<feature type="glycosylation site" description="N-linked (GlcNAc...) asparagine" evidence="4">
    <location>
        <position position="654"/>
    </location>
</feature>
<feature type="glycosylation site" description="N-linked (GlcNAc...) asparagine" evidence="4">
    <location>
        <position position="658"/>
    </location>
</feature>
<feature type="glycosylation site" description="N-linked (GlcNAc...) asparagine" evidence="4">
    <location>
        <position position="672"/>
    </location>
</feature>
<feature type="glycosylation site" description="N-linked (GlcNAc...) asparagine" evidence="4">
    <location>
        <position position="676"/>
    </location>
</feature>
<feature type="glycosylation site" description="N-linked (GlcNAc...) asparagine" evidence="4">
    <location>
        <position position="807"/>
    </location>
</feature>
<feature type="glycosylation site" description="N-linked (GlcNAc...) asparagine" evidence="4">
    <location>
        <position position="854"/>
    </location>
</feature>
<feature type="glycosylation site" description="N-linked (GlcNAc...) asparagine" evidence="4">
    <location>
        <position position="904"/>
    </location>
</feature>
<feature type="disulfide bond" evidence="1">
    <location>
        <begin position="87"/>
        <end position="97"/>
    </location>
</feature>
<feature type="disulfide bond" evidence="1">
    <location>
        <begin position="142"/>
        <end position="162"/>
    </location>
</feature>
<feature type="disulfide bond" evidence="1">
    <location>
        <begin position="179"/>
        <end position="194"/>
    </location>
</feature>
<feature type="disulfide bond" evidence="1">
    <location>
        <begin position="482"/>
        <end position="491"/>
    </location>
</feature>
<feature type="disulfide bond" evidence="1">
    <location>
        <begin position="497"/>
        <end position="555"/>
    </location>
</feature>
<feature type="disulfide bond" evidence="1">
    <location>
        <begin position="620"/>
        <end position="625"/>
    </location>
</feature>
<feature type="disulfide bond" evidence="1">
    <location>
        <begin position="696"/>
        <end position="706"/>
    </location>
</feature>
<feature type="disulfide bond" evidence="1">
    <location>
        <begin position="855"/>
        <end position="891"/>
    </location>
</feature>
<feature type="disulfide bond" evidence="1">
    <location>
        <begin position="898"/>
        <end position="903"/>
    </location>
</feature>
<feature type="sequence variant" id="VAR_055091" description="In dbSNP:rs267561." evidence="10 11">
    <original>G</original>
    <variation>E</variation>
    <location>
        <position position="507"/>
    </location>
</feature>
<feature type="sequence variant" id="VAR_036073" description="In a breast cancer sample; somatic mutation; dbSNP:rs781472543." evidence="6">
    <original>R</original>
    <variation>C</variation>
    <location>
        <position position="750"/>
    </location>
</feature>
<protein>
    <recommendedName>
        <fullName>Integrin alpha-9</fullName>
    </recommendedName>
    <alternativeName>
        <fullName>Integrin alpha-RLC</fullName>
    </alternativeName>
</protein>